<sequence>MLGAIREPPIDVQIALHSRDDNQTGLVLRGTRRTVDRVLKGLCSSPCFFCSVSLTMATLTTTMATTATMATTEASKPLEAQARTALTKATNYAWEIFSNRHWCGELESNVTVTCEHIFFLYVLYQHIDPGEGSQYRQWLLSQQNSDGSWGIAPNYPGDISTSAEAYLALRIIGMSTDSPELYRARTFIRAAGGLSKMRMFTRIFFAEFGLVPWTAIPQLPAEFILVPAHFPISIYRLASWARSNVVPLLIIAHHRPLYPLPNGLHKQNPFLDELWLDPATKPLPYGSSDPTDPVAFVFTILDKALSYLGGLRRSPTRGYARRRCVQWILQHQEKAGDWAGIIPPMHAGIKALLLEGYKLHDEPIQLGLAAIERFTWADNRGKRLQCCISPVWDTVLMIRALQDTPASLGIKLDPRIADALAWTAENQHRGPEGDWRVYKPNIPVGGWAFEYHNTWYPDIDDTAAAVLAFLTHDPATARSRLVRDAVLWIVGMQNADGGWAAFDHENNQLFLNKIPFSDMESLCDPSTPDVTGRTIECLGMLRDLLMRPAENAENGEKYGYPDGEGDAAADAHLLQIINTACARAIPYLIRSQEATGTWYGRWAVNYVYGTCLVLCGLQYFKHDPKFAPEIQAMAARAVKWLKQVQNSDGGWGESLLSYREPWRAGCGPSTPSQTAWALMGILTVCGGEDRSVQRGVRHLVDTQDDTLSQGDGGAAAWTEREFTIREPLHEASQRIGSD</sequence>
<keyword id="KW-0413">Isomerase</keyword>
<keyword id="KW-0677">Repeat</keyword>
<accession>B0Y565</accession>
<organism>
    <name type="scientific">Aspergillus fumigatus (strain CBS 144.89 / FGSC A1163 / CEA10)</name>
    <name type="common">Neosartorya fumigata</name>
    <dbReference type="NCBI Taxonomy" id="451804"/>
    <lineage>
        <taxon>Eukaryota</taxon>
        <taxon>Fungi</taxon>
        <taxon>Dikarya</taxon>
        <taxon>Ascomycota</taxon>
        <taxon>Pezizomycotina</taxon>
        <taxon>Eurotiomycetes</taxon>
        <taxon>Eurotiomycetidae</taxon>
        <taxon>Eurotiales</taxon>
        <taxon>Aspergillaceae</taxon>
        <taxon>Aspergillus</taxon>
        <taxon>Aspergillus subgen. Fumigati</taxon>
    </lineage>
</organism>
<gene>
    <name evidence="4" type="primary">afumA</name>
    <name type="ORF">AFUB_071550</name>
</gene>
<name>AFUMA_ASPFC</name>
<evidence type="ECO:0000250" key="1">
    <source>
        <dbReference type="UniProtKB" id="P48449"/>
    </source>
</evidence>
<evidence type="ECO:0000255" key="2"/>
<evidence type="ECO:0000269" key="3">
    <source>
    </source>
</evidence>
<evidence type="ECO:0000303" key="4">
    <source>
    </source>
</evidence>
<evidence type="ECO:0000305" key="5"/>
<comment type="function">
    <text evidence="3">Squalene hopane cyclase; part of the gene cluster that mediates the biosynthesis fumihopaside A, a hopane-type glucoside that enhances the thermotolerance and UV resistance of N.fumigata (PubMed:30977375). The first step of fumihopaside A biosynthesis is performed by the squalene hopane cyclase afumA that catalyzes the cyclization of 3S-oxidosqualene into the hopene 21-beta-H-hopane-3-beta,22-diol (PubMed:30977375). The cytochrome P450 monooxygenase afumB is responsible for both hydroxylation at C-24 and oxidations at C-30 of the afumA product (PubMed:30977375). The glycosyltransferase afumC then catalyzes the glycosylation at C-24, using UDP-D-glucose as a donor, to produce fumihopaside A (PubMed:30977375). AfumC is also able to accept UDP-D-galactose and UDP-D-glucuronic acid as donors to yield minor derivatives (PubMed:30977375). Fumihopaside B, another minor derivative produced, is different from fumihopaside A due to the presence of a double bond between C-22 and C-29 (PubMed:30977375).</text>
</comment>
<comment type="pathway">
    <text evidence="3">Secondary metabolite biosynthesis.</text>
</comment>
<comment type="disruption phenotype">
    <text evidence="3">Impairs the production of fumihopaside A.</text>
</comment>
<comment type="similarity">
    <text evidence="5">Belongs to the terpene cyclase/mutase family.</text>
</comment>
<reference key="1">
    <citation type="journal article" date="2008" name="PLoS Genet.">
        <title>Genomic islands in the pathogenic filamentous fungus Aspergillus fumigatus.</title>
        <authorList>
            <person name="Fedorova N.D."/>
            <person name="Khaldi N."/>
            <person name="Joardar V.S."/>
            <person name="Maiti R."/>
            <person name="Amedeo P."/>
            <person name="Anderson M.J."/>
            <person name="Crabtree J."/>
            <person name="Silva J.C."/>
            <person name="Badger J.H."/>
            <person name="Albarraq A."/>
            <person name="Angiuoli S."/>
            <person name="Bussey H."/>
            <person name="Bowyer P."/>
            <person name="Cotty P.J."/>
            <person name="Dyer P.S."/>
            <person name="Egan A."/>
            <person name="Galens K."/>
            <person name="Fraser-Liggett C.M."/>
            <person name="Haas B.J."/>
            <person name="Inman J.M."/>
            <person name="Kent R."/>
            <person name="Lemieux S."/>
            <person name="Malavazi I."/>
            <person name="Orvis J."/>
            <person name="Roemer T."/>
            <person name="Ronning C.M."/>
            <person name="Sundaram J.P."/>
            <person name="Sutton G."/>
            <person name="Turner G."/>
            <person name="Venter J.C."/>
            <person name="White O.R."/>
            <person name="Whitty B.R."/>
            <person name="Youngman P."/>
            <person name="Wolfe K.H."/>
            <person name="Goldman G.H."/>
            <person name="Wortman J.R."/>
            <person name="Jiang B."/>
            <person name="Denning D.W."/>
            <person name="Nierman W.C."/>
        </authorList>
    </citation>
    <scope>NUCLEOTIDE SEQUENCE [LARGE SCALE GENOMIC DNA]</scope>
    <source>
        <strain>CBS 144.89 / FGSC A1163 / CEA10</strain>
    </source>
</reference>
<reference key="2">
    <citation type="journal article" date="2019" name="Org. Lett.">
        <title>Characterization and Biosynthesis of a Rare Fungal Hopane-Type Triterpenoid Glycoside Involved in the Antistress Property of Aspergillus fumigatus.</title>
        <authorList>
            <person name="Ma K."/>
            <person name="Zhang P."/>
            <person name="Tao Q."/>
            <person name="Keller N.P."/>
            <person name="Yang Y."/>
            <person name="Yin W.B."/>
            <person name="Liu H."/>
        </authorList>
    </citation>
    <scope>FUNCTION</scope>
    <scope>DISRUPTION PHENOTYPE</scope>
    <scope>CATALYTIC ACTIVITY</scope>
    <scope>PATHWAY</scope>
</reference>
<protein>
    <recommendedName>
        <fullName evidence="4">Squalene hopane cyclase afumA</fullName>
        <ecNumber evidence="3">5.4.99.-</ecNumber>
    </recommendedName>
    <alternativeName>
        <fullName evidence="4">Fumihopaside A biosynthesis cluster protein A</fullName>
    </alternativeName>
</protein>
<dbReference type="EC" id="5.4.99.-" evidence="3"/>
<dbReference type="EMBL" id="DS499598">
    <property type="protein sequence ID" value="EDP50814.1"/>
    <property type="molecule type" value="Genomic_DNA"/>
</dbReference>
<dbReference type="SMR" id="B0Y565"/>
<dbReference type="EnsemblFungi" id="EDP50814">
    <property type="protein sequence ID" value="EDP50814"/>
    <property type="gene ID" value="AFUB_071550"/>
</dbReference>
<dbReference type="VEuPathDB" id="FungiDB:AFUB_071550"/>
<dbReference type="HOGENOM" id="CLU_019345_0_0_1"/>
<dbReference type="OrthoDB" id="33853at5052"/>
<dbReference type="PhylomeDB" id="B0Y565"/>
<dbReference type="Proteomes" id="UP000001699">
    <property type="component" value="Unassembled WGS sequence"/>
</dbReference>
<dbReference type="GO" id="GO:0005811">
    <property type="term" value="C:lipid droplet"/>
    <property type="evidence" value="ECO:0007669"/>
    <property type="project" value="InterPro"/>
</dbReference>
<dbReference type="GO" id="GO:0016866">
    <property type="term" value="F:intramolecular transferase activity"/>
    <property type="evidence" value="ECO:0007669"/>
    <property type="project" value="InterPro"/>
</dbReference>
<dbReference type="GO" id="GO:0016104">
    <property type="term" value="P:triterpenoid biosynthetic process"/>
    <property type="evidence" value="ECO:0007669"/>
    <property type="project" value="InterPro"/>
</dbReference>
<dbReference type="Gene3D" id="1.50.10.20">
    <property type="match status" value="2"/>
</dbReference>
<dbReference type="InterPro" id="IPR032696">
    <property type="entry name" value="SQ_cyclase_C"/>
</dbReference>
<dbReference type="InterPro" id="IPR032697">
    <property type="entry name" value="SQ_cyclase_N"/>
</dbReference>
<dbReference type="InterPro" id="IPR018333">
    <property type="entry name" value="Squalene_cyclase"/>
</dbReference>
<dbReference type="InterPro" id="IPR008930">
    <property type="entry name" value="Terpenoid_cyclase/PrenylTrfase"/>
</dbReference>
<dbReference type="NCBIfam" id="TIGR01787">
    <property type="entry name" value="squalene_cyclas"/>
    <property type="match status" value="1"/>
</dbReference>
<dbReference type="PANTHER" id="PTHR11764">
    <property type="entry name" value="TERPENE CYCLASE/MUTASE FAMILY MEMBER"/>
    <property type="match status" value="1"/>
</dbReference>
<dbReference type="PANTHER" id="PTHR11764:SF82">
    <property type="entry name" value="TERPENE CYCLASE_MUTASE FAMILY MEMBER"/>
    <property type="match status" value="1"/>
</dbReference>
<dbReference type="Pfam" id="PF13243">
    <property type="entry name" value="SQHop_cyclase_C"/>
    <property type="match status" value="2"/>
</dbReference>
<dbReference type="Pfam" id="PF13249">
    <property type="entry name" value="SQHop_cyclase_N"/>
    <property type="match status" value="1"/>
</dbReference>
<dbReference type="SFLD" id="SFLDG01016">
    <property type="entry name" value="Prenyltransferase_Like_2"/>
    <property type="match status" value="1"/>
</dbReference>
<dbReference type="SUPFAM" id="SSF81853">
    <property type="entry name" value="Family 10 polysaccharide lyase"/>
    <property type="match status" value="1"/>
</dbReference>
<dbReference type="SUPFAM" id="SSF48239">
    <property type="entry name" value="Terpenoid cyclases/Protein prenyltransferases"/>
    <property type="match status" value="1"/>
</dbReference>
<proteinExistence type="evidence at protein level"/>
<feature type="chain" id="PRO_0000452738" description="Squalene hopane cyclase afumA">
    <location>
        <begin position="1"/>
        <end position="738"/>
    </location>
</feature>
<feature type="repeat" description="PFTB 1" evidence="2">
    <location>
        <begin position="132"/>
        <end position="173"/>
    </location>
</feature>
<feature type="repeat" description="PFTB 2" evidence="2">
    <location>
        <begin position="321"/>
        <end position="361"/>
    </location>
</feature>
<feature type="repeat" description="PFTB 3" evidence="2">
    <location>
        <begin position="482"/>
        <end position="523"/>
    </location>
</feature>
<feature type="repeat" description="PFTB 4" evidence="2">
    <location>
        <begin position="581"/>
        <end position="621"/>
    </location>
</feature>
<feature type="repeat" description="PFTB 5" evidence="2">
    <location>
        <begin position="634"/>
        <end position="675"/>
    </location>
</feature>
<feature type="active site" description="Proton donor" evidence="1">
    <location>
        <position position="460"/>
    </location>
</feature>
<feature type="site" description="Transition state stabilizer" evidence="1">
    <location>
        <position position="392"/>
    </location>
</feature>
<feature type="site" description="Transition state stabilizer" evidence="1">
    <location>
        <position position="449"/>
    </location>
</feature>
<feature type="site" description="Transition state stabilizer" evidence="1">
    <location>
        <position position="602"/>
    </location>
</feature>